<evidence type="ECO:0000255" key="1">
    <source>
        <dbReference type="PROSITE-ProRule" id="PRU00253"/>
    </source>
</evidence>
<evidence type="ECO:0000305" key="2"/>
<accession>P77700</accession>
<accession>Q2MCA7</accession>
<comment type="interaction">
    <interactant intactId="EBI-545731">
        <id>P77700</id>
    </interactant>
    <interactant intactId="EBI-545674">
        <id>P11989</id>
        <label>bglG</label>
    </interactant>
    <organismsDiffer>false</organismsDiffer>
    <experiments>4</experiments>
</comment>
<comment type="similarity">
    <text evidence="2">Belongs to the LysR transcriptional regulatory family.</text>
</comment>
<sequence length="310" mass="34866">MNSIFTEENLLAFTTAARFGSFSKAAEELGLTTSAISYTIKRMETGLDVVLFTRSTRSIELTESGRYFFRKATDLLNDFYAIKRRIDTISQGIEARVRICINQLLYTPKHTARLLQVLKKQFPTCQITVTTEVYNGVWDAIINNQANIAIGAPDTLLDGGGIDYTEIGAIRWAFAIAPDHPLAFVPEPIAESQLRLYPNIMVEDTAHTINKKVGWLLHGQESILVPDFNTKCQCQILGEGIGFLPDYMVREAMTQSLLVTRQIHNPRQDSRMLLATQHSATGQVTQWIKKQFAPNGILTGIYQDLLHREN</sequence>
<organism>
    <name type="scientific">Escherichia coli (strain K12)</name>
    <dbReference type="NCBI Taxonomy" id="83333"/>
    <lineage>
        <taxon>Bacteria</taxon>
        <taxon>Pseudomonadati</taxon>
        <taxon>Pseudomonadota</taxon>
        <taxon>Gammaproteobacteria</taxon>
        <taxon>Enterobacterales</taxon>
        <taxon>Enterobacteriaceae</taxon>
        <taxon>Escherichia</taxon>
    </lineage>
</organism>
<proteinExistence type="evidence at protein level"/>
<reference key="1">
    <citation type="submission" date="1997-01" db="EMBL/GenBank/DDBJ databases">
        <title>Sequence of minutes 4-25 of Escherichia coli.</title>
        <authorList>
            <person name="Chung E."/>
            <person name="Allen E."/>
            <person name="Araujo R."/>
            <person name="Aparicio A.M."/>
            <person name="Davis K."/>
            <person name="Duncan M."/>
            <person name="Federspiel N."/>
            <person name="Hyman R."/>
            <person name="Kalman S."/>
            <person name="Komp C."/>
            <person name="Kurdi O."/>
            <person name="Lew H."/>
            <person name="Lin D."/>
            <person name="Namath A."/>
            <person name="Oefner P."/>
            <person name="Roberts D."/>
            <person name="Schramm S."/>
            <person name="Davis R.W."/>
        </authorList>
    </citation>
    <scope>NUCLEOTIDE SEQUENCE [LARGE SCALE GENOMIC DNA]</scope>
    <source>
        <strain>K12 / MG1655 / ATCC 47076</strain>
    </source>
</reference>
<reference key="2">
    <citation type="journal article" date="1997" name="Science">
        <title>The complete genome sequence of Escherichia coli K-12.</title>
        <authorList>
            <person name="Blattner F.R."/>
            <person name="Plunkett G. III"/>
            <person name="Bloch C.A."/>
            <person name="Perna N.T."/>
            <person name="Burland V."/>
            <person name="Riley M."/>
            <person name="Collado-Vides J."/>
            <person name="Glasner J.D."/>
            <person name="Rode C.K."/>
            <person name="Mayhew G.F."/>
            <person name="Gregor J."/>
            <person name="Davis N.W."/>
            <person name="Kirkpatrick H.A."/>
            <person name="Goeden M.A."/>
            <person name="Rose D.J."/>
            <person name="Mau B."/>
            <person name="Shao Y."/>
        </authorList>
    </citation>
    <scope>NUCLEOTIDE SEQUENCE [LARGE SCALE GENOMIC DNA]</scope>
    <source>
        <strain>K12 / MG1655 / ATCC 47076</strain>
    </source>
</reference>
<reference key="3">
    <citation type="journal article" date="2006" name="Mol. Syst. Biol.">
        <title>Highly accurate genome sequences of Escherichia coli K-12 strains MG1655 and W3110.</title>
        <authorList>
            <person name="Hayashi K."/>
            <person name="Morooka N."/>
            <person name="Yamamoto Y."/>
            <person name="Fujita K."/>
            <person name="Isono K."/>
            <person name="Choi S."/>
            <person name="Ohtsubo E."/>
            <person name="Baba T."/>
            <person name="Wanner B.L."/>
            <person name="Mori H."/>
            <person name="Horiuchi T."/>
        </authorList>
    </citation>
    <scope>NUCLEOTIDE SEQUENCE [LARGE SCALE GENOMIC DNA]</scope>
    <source>
        <strain>K12 / W3110 / ATCC 27325 / DSM 5911</strain>
    </source>
</reference>
<dbReference type="EMBL" id="U73857">
    <property type="protein sequence ID" value="AAB18042.1"/>
    <property type="molecule type" value="Genomic_DNA"/>
</dbReference>
<dbReference type="EMBL" id="U00096">
    <property type="protein sequence ID" value="AAC73419.1"/>
    <property type="molecule type" value="Genomic_DNA"/>
</dbReference>
<dbReference type="EMBL" id="AP009048">
    <property type="protein sequence ID" value="BAE76099.1"/>
    <property type="molecule type" value="Genomic_DNA"/>
</dbReference>
<dbReference type="PIR" id="D64758">
    <property type="entry name" value="D64758"/>
</dbReference>
<dbReference type="RefSeq" id="NP_414850.1">
    <property type="nucleotide sequence ID" value="NC_000913.3"/>
</dbReference>
<dbReference type="RefSeq" id="WP_001084394.1">
    <property type="nucleotide sequence ID" value="NZ_LN832404.1"/>
</dbReference>
<dbReference type="SMR" id="P77700"/>
<dbReference type="BioGRID" id="4262804">
    <property type="interactions" value="92"/>
</dbReference>
<dbReference type="BioGRID" id="849656">
    <property type="interactions" value="1"/>
</dbReference>
<dbReference type="DIP" id="DIP-11254N"/>
<dbReference type="FunCoup" id="P77700">
    <property type="interactions" value="107"/>
</dbReference>
<dbReference type="IntAct" id="P77700">
    <property type="interactions" value="6"/>
</dbReference>
<dbReference type="STRING" id="511145.b0316"/>
<dbReference type="PaxDb" id="511145-b0316"/>
<dbReference type="DNASU" id="945278"/>
<dbReference type="EnsemblBacteria" id="AAC73419">
    <property type="protein sequence ID" value="AAC73419"/>
    <property type="gene ID" value="b0316"/>
</dbReference>
<dbReference type="GeneID" id="945278"/>
<dbReference type="KEGG" id="ecj:JW0308"/>
<dbReference type="KEGG" id="eco:b0316"/>
<dbReference type="KEGG" id="ecoc:C3026_01550"/>
<dbReference type="KEGG" id="ecoc:C3026_24720"/>
<dbReference type="PATRIC" id="fig|1411691.4.peg.1961"/>
<dbReference type="EchoBASE" id="EB3356"/>
<dbReference type="eggNOG" id="COG0583">
    <property type="taxonomic scope" value="Bacteria"/>
</dbReference>
<dbReference type="HOGENOM" id="CLU_039613_35_1_6"/>
<dbReference type="InParanoid" id="P77700"/>
<dbReference type="OMA" id="IGAIRWV"/>
<dbReference type="OrthoDB" id="196624at2"/>
<dbReference type="PhylomeDB" id="P77700"/>
<dbReference type="BioCyc" id="EcoCyc:G6181-MONOMER"/>
<dbReference type="PRO" id="PR:P77700"/>
<dbReference type="Proteomes" id="UP000000625">
    <property type="component" value="Chromosome"/>
</dbReference>
<dbReference type="GO" id="GO:0003700">
    <property type="term" value="F:DNA-binding transcription factor activity"/>
    <property type="evidence" value="ECO:0007669"/>
    <property type="project" value="InterPro"/>
</dbReference>
<dbReference type="GO" id="GO:0000976">
    <property type="term" value="F:transcription cis-regulatory region binding"/>
    <property type="evidence" value="ECO:0000318"/>
    <property type="project" value="GO_Central"/>
</dbReference>
<dbReference type="GO" id="GO:0006355">
    <property type="term" value="P:regulation of DNA-templated transcription"/>
    <property type="evidence" value="ECO:0000318"/>
    <property type="project" value="GO_Central"/>
</dbReference>
<dbReference type="FunFam" id="1.10.10.10:FF:000406">
    <property type="entry name" value="DNA-binding transcriptional LysR family regulator"/>
    <property type="match status" value="1"/>
</dbReference>
<dbReference type="FunFam" id="3.40.190.290:FF:000017">
    <property type="entry name" value="LysR family transcriptional regulator"/>
    <property type="match status" value="1"/>
</dbReference>
<dbReference type="Gene3D" id="3.40.190.290">
    <property type="match status" value="1"/>
</dbReference>
<dbReference type="Gene3D" id="1.10.10.10">
    <property type="entry name" value="Winged helix-like DNA-binding domain superfamily/Winged helix DNA-binding domain"/>
    <property type="match status" value="1"/>
</dbReference>
<dbReference type="InterPro" id="IPR005119">
    <property type="entry name" value="LysR_subst-bd"/>
</dbReference>
<dbReference type="InterPro" id="IPR000847">
    <property type="entry name" value="Tscrpt_reg_HTH_LysR"/>
</dbReference>
<dbReference type="InterPro" id="IPR036388">
    <property type="entry name" value="WH-like_DNA-bd_sf"/>
</dbReference>
<dbReference type="InterPro" id="IPR036390">
    <property type="entry name" value="WH_DNA-bd_sf"/>
</dbReference>
<dbReference type="PANTHER" id="PTHR30126">
    <property type="entry name" value="HTH-TYPE TRANSCRIPTIONAL REGULATOR"/>
    <property type="match status" value="1"/>
</dbReference>
<dbReference type="PANTHER" id="PTHR30126:SF18">
    <property type="entry name" value="LYSR FAMILY TRANSCRIPTIONAL REGULATOR"/>
    <property type="match status" value="1"/>
</dbReference>
<dbReference type="Pfam" id="PF00126">
    <property type="entry name" value="HTH_1"/>
    <property type="match status" value="1"/>
</dbReference>
<dbReference type="Pfam" id="PF03466">
    <property type="entry name" value="LysR_substrate"/>
    <property type="match status" value="1"/>
</dbReference>
<dbReference type="SUPFAM" id="SSF53850">
    <property type="entry name" value="Periplasmic binding protein-like II"/>
    <property type="match status" value="1"/>
</dbReference>
<dbReference type="SUPFAM" id="SSF46785">
    <property type="entry name" value="Winged helix' DNA-binding domain"/>
    <property type="match status" value="1"/>
</dbReference>
<dbReference type="PROSITE" id="PS50931">
    <property type="entry name" value="HTH_LYSR"/>
    <property type="match status" value="1"/>
</dbReference>
<name>YAHB_ECOLI</name>
<keyword id="KW-0238">DNA-binding</keyword>
<keyword id="KW-1185">Reference proteome</keyword>
<keyword id="KW-0804">Transcription</keyword>
<keyword id="KW-0805">Transcription regulation</keyword>
<gene>
    <name type="primary">yahB</name>
    <name type="ordered locus">b0316</name>
    <name type="ordered locus">JW0308</name>
</gene>
<protein>
    <recommendedName>
        <fullName>Uncharacterized HTH-type transcriptional regulator YahB</fullName>
    </recommendedName>
</protein>
<feature type="chain" id="PRO_0000105775" description="Uncharacterized HTH-type transcriptional regulator YahB">
    <location>
        <begin position="1"/>
        <end position="310"/>
    </location>
</feature>
<feature type="domain" description="HTH lysR-type" evidence="1">
    <location>
        <begin position="5"/>
        <end position="62"/>
    </location>
</feature>
<feature type="DNA-binding region" description="H-T-H motif" evidence="1">
    <location>
        <begin position="22"/>
        <end position="42"/>
    </location>
</feature>